<keyword id="KW-0687">Ribonucleoprotein</keyword>
<keyword id="KW-0689">Ribosomal protein</keyword>
<keyword id="KW-0694">RNA-binding</keyword>
<keyword id="KW-0699">rRNA-binding</keyword>
<keyword id="KW-0820">tRNA-binding</keyword>
<accession>C0M9H3</accession>
<evidence type="ECO:0000255" key="1">
    <source>
        <dbReference type="HAMAP-Rule" id="MF_01333"/>
    </source>
</evidence>
<evidence type="ECO:0000305" key="2"/>
<organism>
    <name type="scientific">Streptococcus equi subsp. equi (strain 4047)</name>
    <dbReference type="NCBI Taxonomy" id="553482"/>
    <lineage>
        <taxon>Bacteria</taxon>
        <taxon>Bacillati</taxon>
        <taxon>Bacillota</taxon>
        <taxon>Bacilli</taxon>
        <taxon>Lactobacillales</taxon>
        <taxon>Streptococcaceae</taxon>
        <taxon>Streptococcus</taxon>
    </lineage>
</organism>
<reference key="1">
    <citation type="journal article" date="2009" name="PLoS Pathog.">
        <title>Genomic evidence for the evolution of Streptococcus equi: host restriction, increased virulence, and genetic exchange with human pathogens.</title>
        <authorList>
            <person name="Holden M.T.G."/>
            <person name="Heather Z."/>
            <person name="Paillot R."/>
            <person name="Steward K.F."/>
            <person name="Webb K."/>
            <person name="Ainslie F."/>
            <person name="Jourdan T."/>
            <person name="Bason N.C."/>
            <person name="Holroyd N.E."/>
            <person name="Mungall K."/>
            <person name="Quail M.A."/>
            <person name="Sanders M."/>
            <person name="Simmonds M."/>
            <person name="Willey D."/>
            <person name="Brooks K."/>
            <person name="Aanensen D.M."/>
            <person name="Spratt B.G."/>
            <person name="Jolley K.A."/>
            <person name="Maiden M.C.J."/>
            <person name="Kehoe M."/>
            <person name="Chanter N."/>
            <person name="Bentley S.D."/>
            <person name="Robinson C."/>
            <person name="Maskell D.J."/>
            <person name="Parkhill J."/>
            <person name="Waller A.S."/>
        </authorList>
    </citation>
    <scope>NUCLEOTIDE SEQUENCE [LARGE SCALE GENOMIC DNA]</scope>
    <source>
        <strain>4047</strain>
    </source>
</reference>
<dbReference type="EMBL" id="FM204883">
    <property type="protein sequence ID" value="CAW91989.1"/>
    <property type="molecule type" value="Genomic_DNA"/>
</dbReference>
<dbReference type="RefSeq" id="WP_003046060.1">
    <property type="nucleotide sequence ID" value="NC_012471.1"/>
</dbReference>
<dbReference type="SMR" id="C0M9H3"/>
<dbReference type="GeneID" id="83703916"/>
<dbReference type="KEGG" id="seu:SEQ_0067"/>
<dbReference type="HOGENOM" id="CLU_061015_2_1_9"/>
<dbReference type="OrthoDB" id="9806626at2"/>
<dbReference type="Proteomes" id="UP000001365">
    <property type="component" value="Chromosome"/>
</dbReference>
<dbReference type="GO" id="GO:1990904">
    <property type="term" value="C:ribonucleoprotein complex"/>
    <property type="evidence" value="ECO:0007669"/>
    <property type="project" value="UniProtKB-KW"/>
</dbReference>
<dbReference type="GO" id="GO:0005840">
    <property type="term" value="C:ribosome"/>
    <property type="evidence" value="ECO:0007669"/>
    <property type="project" value="UniProtKB-KW"/>
</dbReference>
<dbReference type="GO" id="GO:0019843">
    <property type="term" value="F:rRNA binding"/>
    <property type="evidence" value="ECO:0007669"/>
    <property type="project" value="UniProtKB-UniRule"/>
</dbReference>
<dbReference type="GO" id="GO:0003735">
    <property type="term" value="F:structural constituent of ribosome"/>
    <property type="evidence" value="ECO:0007669"/>
    <property type="project" value="InterPro"/>
</dbReference>
<dbReference type="GO" id="GO:0000049">
    <property type="term" value="F:tRNA binding"/>
    <property type="evidence" value="ECO:0007669"/>
    <property type="project" value="UniProtKB-UniRule"/>
</dbReference>
<dbReference type="GO" id="GO:0006412">
    <property type="term" value="P:translation"/>
    <property type="evidence" value="ECO:0007669"/>
    <property type="project" value="UniProtKB-UniRule"/>
</dbReference>
<dbReference type="FunFam" id="3.30.1440.10:FF:000001">
    <property type="entry name" value="50S ribosomal protein L5"/>
    <property type="match status" value="1"/>
</dbReference>
<dbReference type="Gene3D" id="3.30.1440.10">
    <property type="match status" value="1"/>
</dbReference>
<dbReference type="HAMAP" id="MF_01333_B">
    <property type="entry name" value="Ribosomal_uL5_B"/>
    <property type="match status" value="1"/>
</dbReference>
<dbReference type="InterPro" id="IPR002132">
    <property type="entry name" value="Ribosomal_uL5"/>
</dbReference>
<dbReference type="InterPro" id="IPR020930">
    <property type="entry name" value="Ribosomal_uL5_bac-type"/>
</dbReference>
<dbReference type="InterPro" id="IPR031309">
    <property type="entry name" value="Ribosomal_uL5_C"/>
</dbReference>
<dbReference type="InterPro" id="IPR020929">
    <property type="entry name" value="Ribosomal_uL5_CS"/>
</dbReference>
<dbReference type="InterPro" id="IPR022803">
    <property type="entry name" value="Ribosomal_uL5_dom_sf"/>
</dbReference>
<dbReference type="InterPro" id="IPR031310">
    <property type="entry name" value="Ribosomal_uL5_N"/>
</dbReference>
<dbReference type="NCBIfam" id="NF000585">
    <property type="entry name" value="PRK00010.1"/>
    <property type="match status" value="1"/>
</dbReference>
<dbReference type="PANTHER" id="PTHR11994">
    <property type="entry name" value="60S RIBOSOMAL PROTEIN L11-RELATED"/>
    <property type="match status" value="1"/>
</dbReference>
<dbReference type="Pfam" id="PF00281">
    <property type="entry name" value="Ribosomal_L5"/>
    <property type="match status" value="1"/>
</dbReference>
<dbReference type="Pfam" id="PF00673">
    <property type="entry name" value="Ribosomal_L5_C"/>
    <property type="match status" value="1"/>
</dbReference>
<dbReference type="PIRSF" id="PIRSF002161">
    <property type="entry name" value="Ribosomal_L5"/>
    <property type="match status" value="1"/>
</dbReference>
<dbReference type="SUPFAM" id="SSF55282">
    <property type="entry name" value="RL5-like"/>
    <property type="match status" value="1"/>
</dbReference>
<dbReference type="PROSITE" id="PS00358">
    <property type="entry name" value="RIBOSOMAL_L5"/>
    <property type="match status" value="1"/>
</dbReference>
<feature type="chain" id="PRO_1000166149" description="Large ribosomal subunit protein uL5">
    <location>
        <begin position="1"/>
        <end position="180"/>
    </location>
</feature>
<protein>
    <recommendedName>
        <fullName evidence="1">Large ribosomal subunit protein uL5</fullName>
    </recommendedName>
    <alternativeName>
        <fullName evidence="2">50S ribosomal protein L5</fullName>
    </alternativeName>
</protein>
<proteinExistence type="inferred from homology"/>
<sequence length="180" mass="19842">MANRLKEKYTNEVIPALTEKFNYTSVMAVPKVEKIVLNMGVGDAVSNAKNLEKAAAELALISGQKPLITKAKKSIAGFRLREGVAIGAKVTLRGERMYEFLDKLVSVSLPRVRDFHGVPTKSFDGRGNYTLGVKEQLIFPEINFDDVDKVRGLDIVIVTTANTDEESRELLKGLGMPFAK</sequence>
<name>RL5_STRE4</name>
<comment type="function">
    <text evidence="1">This is one of the proteins that bind and probably mediate the attachment of the 5S RNA into the large ribosomal subunit, where it forms part of the central protuberance. In the 70S ribosome it contacts protein S13 of the 30S subunit (bridge B1b), connecting the 2 subunits; this bridge is implicated in subunit movement. Contacts the P site tRNA; the 5S rRNA and some of its associated proteins might help stabilize positioning of ribosome-bound tRNAs.</text>
</comment>
<comment type="subunit">
    <text evidence="1">Part of the 50S ribosomal subunit; part of the 5S rRNA/L5/L18/L25 subcomplex. Contacts the 5S rRNA and the P site tRNA. Forms a bridge to the 30S subunit in the 70S ribosome.</text>
</comment>
<comment type="similarity">
    <text evidence="1">Belongs to the universal ribosomal protein uL5 family.</text>
</comment>
<gene>
    <name evidence="1" type="primary">rplE</name>
    <name type="ordered locus">SEQ_0067</name>
</gene>